<name>SMG9_XENTR</name>
<proteinExistence type="evidence at transcript level"/>
<organism>
    <name type="scientific">Xenopus tropicalis</name>
    <name type="common">Western clawed frog</name>
    <name type="synonym">Silurana tropicalis</name>
    <dbReference type="NCBI Taxonomy" id="8364"/>
    <lineage>
        <taxon>Eukaryota</taxon>
        <taxon>Metazoa</taxon>
        <taxon>Chordata</taxon>
        <taxon>Craniata</taxon>
        <taxon>Vertebrata</taxon>
        <taxon>Euteleostomi</taxon>
        <taxon>Amphibia</taxon>
        <taxon>Batrachia</taxon>
        <taxon>Anura</taxon>
        <taxon>Pipoidea</taxon>
        <taxon>Pipidae</taxon>
        <taxon>Xenopodinae</taxon>
        <taxon>Xenopus</taxon>
        <taxon>Silurana</taxon>
    </lineage>
</organism>
<reference key="1">
    <citation type="submission" date="2008-08" db="EMBL/GenBank/DDBJ databases">
        <authorList>
            <consortium name="NIH - Xenopus Gene Collection (XGC) project"/>
        </authorList>
    </citation>
    <scope>NUCLEOTIDE SEQUENCE [LARGE SCALE MRNA]</scope>
    <source>
        <strain>N6</strain>
        <tissue>Heart</tissue>
    </source>
</reference>
<dbReference type="EMBL" id="BC168445">
    <property type="protein sequence ID" value="AAI68445.1"/>
    <property type="molecule type" value="mRNA"/>
</dbReference>
<dbReference type="RefSeq" id="NP_001135618.1">
    <property type="nucleotide sequence ID" value="NM_001142146.1"/>
</dbReference>
<dbReference type="RefSeq" id="XP_012821683.1">
    <property type="nucleotide sequence ID" value="XM_012966229.3"/>
</dbReference>
<dbReference type="RefSeq" id="XP_012821684.1">
    <property type="nucleotide sequence ID" value="XM_012966230.3"/>
</dbReference>
<dbReference type="SMR" id="B5DDX6"/>
<dbReference type="FunCoup" id="B5DDX6">
    <property type="interactions" value="1069"/>
</dbReference>
<dbReference type="STRING" id="8364.ENSXETP00000028018"/>
<dbReference type="PaxDb" id="8364-ENSXETP00000008862"/>
<dbReference type="GeneID" id="100216177"/>
<dbReference type="KEGG" id="xtr:100216177"/>
<dbReference type="AGR" id="Xenbase:XB-GENE-990837"/>
<dbReference type="CTD" id="56006"/>
<dbReference type="Xenbase" id="XB-GENE-990837">
    <property type="gene designation" value="smg9"/>
</dbReference>
<dbReference type="eggNOG" id="KOG4181">
    <property type="taxonomic scope" value="Eukaryota"/>
</dbReference>
<dbReference type="HOGENOM" id="CLU_037795_0_0_1"/>
<dbReference type="InParanoid" id="B5DDX6"/>
<dbReference type="OMA" id="SEYYPHL"/>
<dbReference type="OrthoDB" id="79514at2759"/>
<dbReference type="PhylomeDB" id="B5DDX6"/>
<dbReference type="TreeFam" id="TF319763"/>
<dbReference type="Reactome" id="R-XTR-975957">
    <property type="pathway name" value="Nonsense Mediated Decay (NMD) enhanced by the Exon Junction Complex (EJC)"/>
</dbReference>
<dbReference type="Proteomes" id="UP000008143">
    <property type="component" value="Chromosome 7"/>
</dbReference>
<dbReference type="Bgee" id="ENSXETG00000004098">
    <property type="expression patterns" value="Expressed in ovary and 13 other cell types or tissues"/>
</dbReference>
<dbReference type="GO" id="GO:0000184">
    <property type="term" value="P:nuclear-transcribed mRNA catabolic process, nonsense-mediated decay"/>
    <property type="evidence" value="ECO:0000250"/>
    <property type="project" value="UniProtKB"/>
</dbReference>
<dbReference type="FunFam" id="3.40.50.300:FF:001272">
    <property type="entry name" value="SMG9 isoform 2"/>
    <property type="match status" value="1"/>
</dbReference>
<dbReference type="Gene3D" id="3.40.50.300">
    <property type="entry name" value="P-loop containing nucleotide triphosphate hydrolases"/>
    <property type="match status" value="1"/>
</dbReference>
<dbReference type="InterPro" id="IPR027417">
    <property type="entry name" value="P-loop_NTPase"/>
</dbReference>
<dbReference type="InterPro" id="IPR039177">
    <property type="entry name" value="SMG9"/>
</dbReference>
<dbReference type="PANTHER" id="PTHR14270">
    <property type="entry name" value="NONSENSE-MEDIATED MRNA DECAY FACTOR SMG9"/>
    <property type="match status" value="1"/>
</dbReference>
<dbReference type="PANTHER" id="PTHR14270:SF0">
    <property type="entry name" value="NONSENSE-MEDIATED MRNA DECAY FACTOR SMG9"/>
    <property type="match status" value="1"/>
</dbReference>
<dbReference type="SUPFAM" id="SSF52540">
    <property type="entry name" value="P-loop containing nucleoside triphosphate hydrolases"/>
    <property type="match status" value="1"/>
</dbReference>
<evidence type="ECO:0000250" key="1"/>
<evidence type="ECO:0000250" key="2">
    <source>
        <dbReference type="UniProtKB" id="Q9H0W8"/>
    </source>
</evidence>
<evidence type="ECO:0000256" key="3">
    <source>
        <dbReference type="SAM" id="MobiDB-lite"/>
    </source>
</evidence>
<evidence type="ECO:0000305" key="4"/>
<accession>B5DDX6</accession>
<comment type="function">
    <text evidence="1">Involved in nonsense-mediated decay (NMD) of mRNAs containing premature stop codons. Is recruited by release factors to stalled ribosomes together with smg1 and smg8 (forming the SMG1C protein kinase complex) and, in the SMG1C complex, is required for the efficient association between smg1 and smg8 (By similarity).</text>
</comment>
<comment type="subunit">
    <text evidence="1">Component of the SMG1C complex composed of smg1, smg8 and smg9.</text>
</comment>
<comment type="similarity">
    <text evidence="4">Belongs to the SMG9 family.</text>
</comment>
<gene>
    <name type="primary">smg9</name>
</gene>
<feature type="chain" id="PRO_0000378184" description="Nonsense-mediated mRNA decay factor SMG9">
    <location>
        <begin position="1"/>
        <end position="508"/>
    </location>
</feature>
<feature type="region of interest" description="Disordered" evidence="3">
    <location>
        <begin position="1"/>
        <end position="60"/>
    </location>
</feature>
<feature type="compositionally biased region" description="Polar residues" evidence="3">
    <location>
        <begin position="1"/>
        <end position="10"/>
    </location>
</feature>
<feature type="compositionally biased region" description="Basic and acidic residues" evidence="3">
    <location>
        <begin position="36"/>
        <end position="54"/>
    </location>
</feature>
<protein>
    <recommendedName>
        <fullName evidence="2">Nonsense-mediated mRNA decay factor SMG9</fullName>
    </recommendedName>
    <alternativeName>
        <fullName>Protein smg-9 homolog</fullName>
    </alternativeName>
</protein>
<sequence>MSDSGHSQPNVFIPGRNRRRRWMDQGPPGHLNLSEPGREKDPMLRDRDQDRWEGNEEGYGYTIQKTPIILAKPTSDRTKAATPAAPPPMEKPIVLMKAREDGKPAAPAEGATAPPPTAVAKVEKEGQRPTQPVYQIQNRGMGAAASASGNVDPVVGQAKLLPPQKMKHSIKLVDEYMNWCDSAIEFLLDQTDVLVVGILGLQGTGKSTLMSLLSANSPDDDQRSYVFRMQSQEVRERAGNQTSGIDFFISQERIIFLDTQPILSPAILDHLINNDRKLPPEYNLPHTYVEMQSLQIAAFLFTVCHVVIVVQDWFTDFNLYRFLQTAEMLKPSTPSPSHESSGSSGSDEGIEYYPHVVFVQNKAKREDYCPRTLKQMHTVIDKLMLHSHLRYKGTLSMLDCNIFPGLPYDFIESEVNLFLIPTMESDVDETISRAGTSGIPLFSLLPAYKGHPSFHSLISRLRSQIMSMSRPQLSHTILTEKNWFHYAARIWDGVKKSSALSEYSRLLG</sequence>
<keyword id="KW-0866">Nonsense-mediated mRNA decay</keyword>
<keyword id="KW-1185">Reference proteome</keyword>